<comment type="catalytic activity">
    <reaction>
        <text>L-seryl-[protein] + ATP = O-phospho-L-seryl-[protein] + ADP + H(+)</text>
        <dbReference type="Rhea" id="RHEA:17989"/>
        <dbReference type="Rhea" id="RHEA-COMP:9863"/>
        <dbReference type="Rhea" id="RHEA-COMP:11604"/>
        <dbReference type="ChEBI" id="CHEBI:15378"/>
        <dbReference type="ChEBI" id="CHEBI:29999"/>
        <dbReference type="ChEBI" id="CHEBI:30616"/>
        <dbReference type="ChEBI" id="CHEBI:83421"/>
        <dbReference type="ChEBI" id="CHEBI:456216"/>
        <dbReference type="EC" id="2.7.11.1"/>
    </reaction>
</comment>
<comment type="catalytic activity">
    <reaction>
        <text>L-threonyl-[protein] + ATP = O-phospho-L-threonyl-[protein] + ADP + H(+)</text>
        <dbReference type="Rhea" id="RHEA:46608"/>
        <dbReference type="Rhea" id="RHEA-COMP:11060"/>
        <dbReference type="Rhea" id="RHEA-COMP:11605"/>
        <dbReference type="ChEBI" id="CHEBI:15378"/>
        <dbReference type="ChEBI" id="CHEBI:30013"/>
        <dbReference type="ChEBI" id="CHEBI:30616"/>
        <dbReference type="ChEBI" id="CHEBI:61977"/>
        <dbReference type="ChEBI" id="CHEBI:456216"/>
        <dbReference type="EC" id="2.7.11.1"/>
    </reaction>
</comment>
<comment type="subunit">
    <text evidence="1">Interacts with calmodulin (CaM) in a Ca(2+)-dependent manner.</text>
</comment>
<comment type="subcellular location">
    <subcellularLocation>
        <location evidence="6">Cytoplasm</location>
    </subcellularLocation>
</comment>
<comment type="similarity">
    <text evidence="3">Belongs to the protein kinase superfamily. Ser/Thr protein kinase family.</text>
</comment>
<comment type="sequence caution" evidence="6">
    <conflict type="erroneous gene model prediction">
        <sequence resource="EMBL-CDS" id="AAB62829"/>
    </conflict>
</comment>
<comment type="sequence caution" evidence="6">
    <conflict type="erroneous gene model prediction">
        <sequence resource="EMBL-CDS" id="AAF02787"/>
    </conflict>
</comment>
<comment type="sequence caution" evidence="6">
    <conflict type="erroneous gene model prediction">
        <sequence resource="EMBL-CDS" id="CAB80791"/>
    </conflict>
</comment>
<organism>
    <name type="scientific">Arabidopsis thaliana</name>
    <name type="common">Mouse-ear cress</name>
    <dbReference type="NCBI Taxonomy" id="3702"/>
    <lineage>
        <taxon>Eukaryota</taxon>
        <taxon>Viridiplantae</taxon>
        <taxon>Streptophyta</taxon>
        <taxon>Embryophyta</taxon>
        <taxon>Tracheophyta</taxon>
        <taxon>Spermatophyta</taxon>
        <taxon>Magnoliopsida</taxon>
        <taxon>eudicotyledons</taxon>
        <taxon>Gunneridae</taxon>
        <taxon>Pentapetalae</taxon>
        <taxon>rosids</taxon>
        <taxon>malvids</taxon>
        <taxon>Brassicales</taxon>
        <taxon>Brassicaceae</taxon>
        <taxon>Camelineae</taxon>
        <taxon>Arabidopsis</taxon>
    </lineage>
</organism>
<sequence>MPSRRRHSYTVGSPATTSSNYSNTTFTDRSFPTTPARTSTDTTTSIARRISGIFINCFTPPDSVSSNYIDNSKSSSDNNIRSRRSSTGSSSVQRSYGNANETEHTRFTFDEIYDATKNFSPSFRIGQGGFGTVYKVKLRDGKTFAVKRAKKSMHDDRQGADAEFMSEIQTLAQVTHLSLVKYYGFVVHNDEKILVVEYVANGTLRDHLDCKEGKTLDMATRLDIATDVAHAITYLHMYTQPPIIHRDIKSSNILLTENYRAKVADFGFARLAPDTDSGATHVSTQVKGTAGYLDPEYLTTYQLTEKSDVYSFGVLLVELLTGRRPIELSRGQKERITIRWAIKKFTSGDTISVLDPKLEQNSANNLALEKVLEMAFQCLAPHRRSRPSMKKCSEILWGIRKDYRELLNTSL</sequence>
<proteinExistence type="evidence at transcript level"/>
<reference key="1">
    <citation type="journal article" date="1999" name="Nature">
        <title>Sequence and analysis of chromosome 4 of the plant Arabidopsis thaliana.</title>
        <authorList>
            <person name="Mayer K.F.X."/>
            <person name="Schueller C."/>
            <person name="Wambutt R."/>
            <person name="Murphy G."/>
            <person name="Volckaert G."/>
            <person name="Pohl T."/>
            <person name="Duesterhoeft A."/>
            <person name="Stiekema W."/>
            <person name="Entian K.-D."/>
            <person name="Terryn N."/>
            <person name="Harris B."/>
            <person name="Ansorge W."/>
            <person name="Brandt P."/>
            <person name="Grivell L.A."/>
            <person name="Rieger M."/>
            <person name="Weichselgartner M."/>
            <person name="de Simone V."/>
            <person name="Obermaier B."/>
            <person name="Mache R."/>
            <person name="Mueller M."/>
            <person name="Kreis M."/>
            <person name="Delseny M."/>
            <person name="Puigdomenech P."/>
            <person name="Watson M."/>
            <person name="Schmidtheini T."/>
            <person name="Reichert B."/>
            <person name="Portetelle D."/>
            <person name="Perez-Alonso M."/>
            <person name="Boutry M."/>
            <person name="Bancroft I."/>
            <person name="Vos P."/>
            <person name="Hoheisel J."/>
            <person name="Zimmermann W."/>
            <person name="Wedler H."/>
            <person name="Ridley P."/>
            <person name="Langham S.-A."/>
            <person name="McCullagh B."/>
            <person name="Bilham L."/>
            <person name="Robben J."/>
            <person name="van der Schueren J."/>
            <person name="Grymonprez B."/>
            <person name="Chuang Y.-J."/>
            <person name="Vandenbussche F."/>
            <person name="Braeken M."/>
            <person name="Weltjens I."/>
            <person name="Voet M."/>
            <person name="Bastiaens I."/>
            <person name="Aert R."/>
            <person name="Defoor E."/>
            <person name="Weitzenegger T."/>
            <person name="Bothe G."/>
            <person name="Ramsperger U."/>
            <person name="Hilbert H."/>
            <person name="Braun M."/>
            <person name="Holzer E."/>
            <person name="Brandt A."/>
            <person name="Peters S."/>
            <person name="van Staveren M."/>
            <person name="Dirkse W."/>
            <person name="Mooijman P."/>
            <person name="Klein Lankhorst R."/>
            <person name="Rose M."/>
            <person name="Hauf J."/>
            <person name="Koetter P."/>
            <person name="Berneiser S."/>
            <person name="Hempel S."/>
            <person name="Feldpausch M."/>
            <person name="Lamberth S."/>
            <person name="Van den Daele H."/>
            <person name="De Keyser A."/>
            <person name="Buysshaert C."/>
            <person name="Gielen J."/>
            <person name="Villarroel R."/>
            <person name="De Clercq R."/>
            <person name="van Montagu M."/>
            <person name="Rogers J."/>
            <person name="Cronin A."/>
            <person name="Quail M.A."/>
            <person name="Bray-Allen S."/>
            <person name="Clark L."/>
            <person name="Doggett J."/>
            <person name="Hall S."/>
            <person name="Kay M."/>
            <person name="Lennard N."/>
            <person name="McLay K."/>
            <person name="Mayes R."/>
            <person name="Pettett A."/>
            <person name="Rajandream M.A."/>
            <person name="Lyne M."/>
            <person name="Benes V."/>
            <person name="Rechmann S."/>
            <person name="Borkova D."/>
            <person name="Bloecker H."/>
            <person name="Scharfe M."/>
            <person name="Grimm M."/>
            <person name="Loehnert T.-H."/>
            <person name="Dose S."/>
            <person name="de Haan M."/>
            <person name="Maarse A.C."/>
            <person name="Schaefer M."/>
            <person name="Mueller-Auer S."/>
            <person name="Gabel C."/>
            <person name="Fuchs M."/>
            <person name="Fartmann B."/>
            <person name="Granderath K."/>
            <person name="Dauner D."/>
            <person name="Herzl A."/>
            <person name="Neumann S."/>
            <person name="Argiriou A."/>
            <person name="Vitale D."/>
            <person name="Liguori R."/>
            <person name="Piravandi E."/>
            <person name="Massenet O."/>
            <person name="Quigley F."/>
            <person name="Clabauld G."/>
            <person name="Muendlein A."/>
            <person name="Felber R."/>
            <person name="Schnabl S."/>
            <person name="Hiller R."/>
            <person name="Schmidt W."/>
            <person name="Lecharny A."/>
            <person name="Aubourg S."/>
            <person name="Chefdor F."/>
            <person name="Cooke R."/>
            <person name="Berger C."/>
            <person name="Monfort A."/>
            <person name="Casacuberta E."/>
            <person name="Gibbons T."/>
            <person name="Weber N."/>
            <person name="Vandenbol M."/>
            <person name="Bargues M."/>
            <person name="Terol J."/>
            <person name="Torres A."/>
            <person name="Perez-Perez A."/>
            <person name="Purnelle B."/>
            <person name="Bent E."/>
            <person name="Johnson S."/>
            <person name="Tacon D."/>
            <person name="Jesse T."/>
            <person name="Heijnen L."/>
            <person name="Schwarz S."/>
            <person name="Scholler P."/>
            <person name="Heber S."/>
            <person name="Francs P."/>
            <person name="Bielke C."/>
            <person name="Frishman D."/>
            <person name="Haase D."/>
            <person name="Lemcke K."/>
            <person name="Mewes H.-W."/>
            <person name="Stocker S."/>
            <person name="Zaccaria P."/>
            <person name="Bevan M."/>
            <person name="Wilson R.K."/>
            <person name="de la Bastide M."/>
            <person name="Habermann K."/>
            <person name="Parnell L."/>
            <person name="Dedhia N."/>
            <person name="Gnoj L."/>
            <person name="Schutz K."/>
            <person name="Huang E."/>
            <person name="Spiegel L."/>
            <person name="Sekhon M."/>
            <person name="Murray J."/>
            <person name="Sheet P."/>
            <person name="Cordes M."/>
            <person name="Abu-Threideh J."/>
            <person name="Stoneking T."/>
            <person name="Kalicki J."/>
            <person name="Graves T."/>
            <person name="Harmon G."/>
            <person name="Edwards J."/>
            <person name="Latreille P."/>
            <person name="Courtney L."/>
            <person name="Cloud J."/>
            <person name="Abbott A."/>
            <person name="Scott K."/>
            <person name="Johnson D."/>
            <person name="Minx P."/>
            <person name="Bentley D."/>
            <person name="Fulton B."/>
            <person name="Miller N."/>
            <person name="Greco T."/>
            <person name="Kemp K."/>
            <person name="Kramer J."/>
            <person name="Fulton L."/>
            <person name="Mardis E."/>
            <person name="Dante M."/>
            <person name="Pepin K."/>
            <person name="Hillier L.W."/>
            <person name="Nelson J."/>
            <person name="Spieth J."/>
            <person name="Ryan E."/>
            <person name="Andrews S."/>
            <person name="Geisel C."/>
            <person name="Layman D."/>
            <person name="Du H."/>
            <person name="Ali J."/>
            <person name="Berghoff A."/>
            <person name="Jones K."/>
            <person name="Drone K."/>
            <person name="Cotton M."/>
            <person name="Joshu C."/>
            <person name="Antonoiu B."/>
            <person name="Zidanic M."/>
            <person name="Strong C."/>
            <person name="Sun H."/>
            <person name="Lamar B."/>
            <person name="Yordan C."/>
            <person name="Ma P."/>
            <person name="Zhong J."/>
            <person name="Preston R."/>
            <person name="Vil D."/>
            <person name="Shekher M."/>
            <person name="Matero A."/>
            <person name="Shah R."/>
            <person name="Swaby I.K."/>
            <person name="O'Shaughnessy A."/>
            <person name="Rodriguez M."/>
            <person name="Hoffman J."/>
            <person name="Till S."/>
            <person name="Granat S."/>
            <person name="Shohdy N."/>
            <person name="Hasegawa A."/>
            <person name="Hameed A."/>
            <person name="Lodhi M."/>
            <person name="Johnson A."/>
            <person name="Chen E."/>
            <person name="Marra M.A."/>
            <person name="Martienssen R."/>
            <person name="McCombie W.R."/>
        </authorList>
    </citation>
    <scope>NUCLEOTIDE SEQUENCE [LARGE SCALE GENOMIC DNA]</scope>
    <source>
        <strain>cv. Columbia</strain>
    </source>
</reference>
<reference key="2">
    <citation type="journal article" date="2017" name="Plant J.">
        <title>Araport11: a complete reannotation of the Arabidopsis thaliana reference genome.</title>
        <authorList>
            <person name="Cheng C.Y."/>
            <person name="Krishnakumar V."/>
            <person name="Chan A.P."/>
            <person name="Thibaud-Nissen F."/>
            <person name="Schobel S."/>
            <person name="Town C.D."/>
        </authorList>
    </citation>
    <scope>GENOME REANNOTATION</scope>
    <source>
        <strain>cv. Columbia</strain>
    </source>
</reference>
<reference key="3">
    <citation type="journal article" date="2003" name="Science">
        <title>Empirical analysis of transcriptional activity in the Arabidopsis genome.</title>
        <authorList>
            <person name="Yamada K."/>
            <person name="Lim J."/>
            <person name="Dale J.M."/>
            <person name="Chen H."/>
            <person name="Shinn P."/>
            <person name="Palm C.J."/>
            <person name="Southwick A.M."/>
            <person name="Wu H.C."/>
            <person name="Kim C.J."/>
            <person name="Nguyen M."/>
            <person name="Pham P.K."/>
            <person name="Cheuk R.F."/>
            <person name="Karlin-Newmann G."/>
            <person name="Liu S.X."/>
            <person name="Lam B."/>
            <person name="Sakano H."/>
            <person name="Wu T."/>
            <person name="Yu G."/>
            <person name="Miranda M."/>
            <person name="Quach H.L."/>
            <person name="Tripp M."/>
            <person name="Chang C.H."/>
            <person name="Lee J.M."/>
            <person name="Toriumi M.J."/>
            <person name="Chan M.M."/>
            <person name="Tang C.C."/>
            <person name="Onodera C.S."/>
            <person name="Deng J.M."/>
            <person name="Akiyama K."/>
            <person name="Ansari Y."/>
            <person name="Arakawa T."/>
            <person name="Banh J."/>
            <person name="Banno F."/>
            <person name="Bowser L."/>
            <person name="Brooks S.Y."/>
            <person name="Carninci P."/>
            <person name="Chao Q."/>
            <person name="Choy N."/>
            <person name="Enju A."/>
            <person name="Goldsmith A.D."/>
            <person name="Gurjal M."/>
            <person name="Hansen N.F."/>
            <person name="Hayashizaki Y."/>
            <person name="Johnson-Hopson C."/>
            <person name="Hsuan V.W."/>
            <person name="Iida K."/>
            <person name="Karnes M."/>
            <person name="Khan S."/>
            <person name="Koesema E."/>
            <person name="Ishida J."/>
            <person name="Jiang P.X."/>
            <person name="Jones T."/>
            <person name="Kawai J."/>
            <person name="Kamiya A."/>
            <person name="Meyers C."/>
            <person name="Nakajima M."/>
            <person name="Narusaka M."/>
            <person name="Seki M."/>
            <person name="Sakurai T."/>
            <person name="Satou M."/>
            <person name="Tamse R."/>
            <person name="Vaysberg M."/>
            <person name="Wallender E.K."/>
            <person name="Wong C."/>
            <person name="Yamamura Y."/>
            <person name="Yuan S."/>
            <person name="Shinozaki K."/>
            <person name="Davis R.W."/>
            <person name="Theologis A."/>
            <person name="Ecker J.R."/>
        </authorList>
    </citation>
    <scope>NUCLEOTIDE SEQUENCE [LARGE SCALE MRNA]</scope>
    <source>
        <strain>cv. Columbia</strain>
    </source>
</reference>
<reference key="4">
    <citation type="submission" date="2006-07" db="EMBL/GenBank/DDBJ databases">
        <title>Large-scale analysis of RIKEN Arabidopsis full-length (RAFL) cDNAs.</title>
        <authorList>
            <person name="Totoki Y."/>
            <person name="Seki M."/>
            <person name="Ishida J."/>
            <person name="Nakajima M."/>
            <person name="Enju A."/>
            <person name="Kamiya A."/>
            <person name="Narusaka M."/>
            <person name="Shin-i T."/>
            <person name="Nakagawa M."/>
            <person name="Sakamoto N."/>
            <person name="Oishi K."/>
            <person name="Kohara Y."/>
            <person name="Kobayashi M."/>
            <person name="Toyoda A."/>
            <person name="Sakaki Y."/>
            <person name="Sakurai T."/>
            <person name="Iida K."/>
            <person name="Akiyama K."/>
            <person name="Satou M."/>
            <person name="Toyoda T."/>
            <person name="Konagaya A."/>
            <person name="Carninci P."/>
            <person name="Kawai J."/>
            <person name="Hayashizaki Y."/>
            <person name="Shinozaki K."/>
        </authorList>
    </citation>
    <scope>NUCLEOTIDE SEQUENCE [LARGE SCALE MRNA]</scope>
    <source>
        <strain>cv. Columbia</strain>
    </source>
</reference>
<reference key="5">
    <citation type="journal article" date="2003" name="Plant Physiol.">
        <title>Expansion of the receptor-like kinase/Pelle gene family and receptor-like proteins in Arabidopsis.</title>
        <authorList>
            <person name="Shiu S.H."/>
            <person name="Bleecker A.B."/>
        </authorList>
    </citation>
    <scope>GENE FAMILY</scope>
</reference>
<keyword id="KW-0067">ATP-binding</keyword>
<keyword id="KW-0963">Cytoplasm</keyword>
<keyword id="KW-0418">Kinase</keyword>
<keyword id="KW-0547">Nucleotide-binding</keyword>
<keyword id="KW-0597">Phosphoprotein</keyword>
<keyword id="KW-1185">Reference proteome</keyword>
<keyword id="KW-0723">Serine/threonine-protein kinase</keyword>
<keyword id="KW-0808">Transferase</keyword>
<gene>
    <name type="primary">CRCK2</name>
    <name type="ordered locus">At4g00330</name>
    <name type="ORF">A_IG005I10.8</name>
    <name type="ORF">F5I10.8</name>
</gene>
<protein>
    <recommendedName>
        <fullName>Calmodulin-binding receptor-like cytoplasmic kinase 2</fullName>
        <ecNumber>2.7.11.1</ecNumber>
    </recommendedName>
</protein>
<evidence type="ECO:0000250" key="1"/>
<evidence type="ECO:0000250" key="2">
    <source>
        <dbReference type="UniProtKB" id="O48814"/>
    </source>
</evidence>
<evidence type="ECO:0000255" key="3">
    <source>
        <dbReference type="PROSITE-ProRule" id="PRU00159"/>
    </source>
</evidence>
<evidence type="ECO:0000255" key="4">
    <source>
        <dbReference type="PROSITE-ProRule" id="PRU10027"/>
    </source>
</evidence>
<evidence type="ECO:0000256" key="5">
    <source>
        <dbReference type="SAM" id="MobiDB-lite"/>
    </source>
</evidence>
<evidence type="ECO:0000305" key="6"/>
<feature type="chain" id="PRO_0000401334" description="Calmodulin-binding receptor-like cytoplasmic kinase 2">
    <location>
        <begin position="1"/>
        <end position="411"/>
    </location>
</feature>
<feature type="domain" description="Protein kinase" evidence="3">
    <location>
        <begin position="119"/>
        <end position="398"/>
    </location>
</feature>
<feature type="region of interest" description="Disordered" evidence="5">
    <location>
        <begin position="1"/>
        <end position="44"/>
    </location>
</feature>
<feature type="region of interest" description="Disordered" evidence="5">
    <location>
        <begin position="66"/>
        <end position="99"/>
    </location>
</feature>
<feature type="region of interest" description="CaM-binding" evidence="1">
    <location>
        <begin position="134"/>
        <end position="159"/>
    </location>
</feature>
<feature type="compositionally biased region" description="Low complexity" evidence="5">
    <location>
        <begin position="16"/>
        <end position="44"/>
    </location>
</feature>
<feature type="compositionally biased region" description="Low complexity" evidence="5">
    <location>
        <begin position="66"/>
        <end position="95"/>
    </location>
</feature>
<feature type="active site" description="Proton acceptor" evidence="3 4">
    <location>
        <position position="247"/>
    </location>
</feature>
<feature type="binding site" evidence="3">
    <location>
        <begin position="125"/>
        <end position="133"/>
    </location>
    <ligand>
        <name>ATP</name>
        <dbReference type="ChEBI" id="CHEBI:30616"/>
    </ligand>
</feature>
<feature type="binding site" evidence="3">
    <location>
        <position position="147"/>
    </location>
    <ligand>
        <name>ATP</name>
        <dbReference type="ChEBI" id="CHEBI:30616"/>
    </ligand>
</feature>
<feature type="modified residue" description="Phosphothreonine" evidence="2">
    <location>
        <position position="108"/>
    </location>
</feature>
<feature type="modified residue" description="Phosphoserine" evidence="2">
    <location>
        <position position="251"/>
    </location>
</feature>
<feature type="modified residue" description="Phosphoserine" evidence="2">
    <location>
        <position position="283"/>
    </location>
</feature>
<feature type="modified residue" description="Phosphothreonine" evidence="2">
    <location>
        <position position="284"/>
    </location>
</feature>
<feature type="modified residue" description="Phosphothreonine" evidence="2">
    <location>
        <position position="289"/>
    </location>
</feature>
<feature type="modified residue" description="Phosphotyrosine" evidence="2">
    <location>
        <position position="297"/>
    </location>
</feature>
<name>CRCK2_ARATH</name>
<accession>Q8VZJ9</accession>
<accession>O23069</accession>
<dbReference type="EC" id="2.7.11.1"/>
<dbReference type="EMBL" id="AF013293">
    <property type="protein sequence ID" value="AAB62829.1"/>
    <property type="status" value="ALT_SEQ"/>
    <property type="molecule type" value="Genomic_DNA"/>
</dbReference>
<dbReference type="EMBL" id="AF195115">
    <property type="protein sequence ID" value="AAF02787.1"/>
    <property type="status" value="ALT_SEQ"/>
    <property type="molecule type" value="Genomic_DNA"/>
</dbReference>
<dbReference type="EMBL" id="AL161471">
    <property type="protein sequence ID" value="CAB80791.1"/>
    <property type="status" value="ALT_SEQ"/>
    <property type="molecule type" value="Genomic_DNA"/>
</dbReference>
<dbReference type="EMBL" id="CP002687">
    <property type="protein sequence ID" value="AEE81858.1"/>
    <property type="molecule type" value="Genomic_DNA"/>
</dbReference>
<dbReference type="EMBL" id="CP002687">
    <property type="protein sequence ID" value="ANM67233.1"/>
    <property type="molecule type" value="Genomic_DNA"/>
</dbReference>
<dbReference type="EMBL" id="AY064064">
    <property type="protein sequence ID" value="AAL36420.1"/>
    <property type="molecule type" value="mRNA"/>
</dbReference>
<dbReference type="EMBL" id="AY133754">
    <property type="protein sequence ID" value="AAM91688.1"/>
    <property type="molecule type" value="mRNA"/>
</dbReference>
<dbReference type="EMBL" id="AK227113">
    <property type="protein sequence ID" value="BAE99164.1"/>
    <property type="molecule type" value="mRNA"/>
</dbReference>
<dbReference type="PIR" id="T01538">
    <property type="entry name" value="T01538"/>
</dbReference>
<dbReference type="RefSeq" id="NP_001329075.1">
    <property type="nucleotide sequence ID" value="NM_001340239.1"/>
</dbReference>
<dbReference type="RefSeq" id="NP_567170.2">
    <property type="nucleotide sequence ID" value="NM_116255.5"/>
</dbReference>
<dbReference type="SMR" id="Q8VZJ9"/>
<dbReference type="BioGRID" id="13414">
    <property type="interactions" value="7"/>
</dbReference>
<dbReference type="FunCoup" id="Q8VZJ9">
    <property type="interactions" value="941"/>
</dbReference>
<dbReference type="STRING" id="3702.Q8VZJ9"/>
<dbReference type="iPTMnet" id="Q8VZJ9"/>
<dbReference type="SwissPalm" id="Q8VZJ9"/>
<dbReference type="PaxDb" id="3702-AT4G00330.1"/>
<dbReference type="ProteomicsDB" id="224519"/>
<dbReference type="EnsemblPlants" id="AT4G00330.1">
    <property type="protein sequence ID" value="AT4G00330.1"/>
    <property type="gene ID" value="AT4G00330"/>
</dbReference>
<dbReference type="EnsemblPlants" id="AT4G00330.2">
    <property type="protein sequence ID" value="AT4G00330.2"/>
    <property type="gene ID" value="AT4G00330"/>
</dbReference>
<dbReference type="GeneID" id="828125"/>
<dbReference type="Gramene" id="AT4G00330.1">
    <property type="protein sequence ID" value="AT4G00330.1"/>
    <property type="gene ID" value="AT4G00330"/>
</dbReference>
<dbReference type="Gramene" id="AT4G00330.2">
    <property type="protein sequence ID" value="AT4G00330.2"/>
    <property type="gene ID" value="AT4G00330"/>
</dbReference>
<dbReference type="KEGG" id="ath:AT4G00330"/>
<dbReference type="Araport" id="AT4G00330"/>
<dbReference type="TAIR" id="AT4G00330">
    <property type="gene designation" value="CRCK2"/>
</dbReference>
<dbReference type="eggNOG" id="KOG1187">
    <property type="taxonomic scope" value="Eukaryota"/>
</dbReference>
<dbReference type="HOGENOM" id="CLU_000288_21_4_1"/>
<dbReference type="InParanoid" id="Q8VZJ9"/>
<dbReference type="OMA" id="HMYTDRP"/>
<dbReference type="PhylomeDB" id="Q8VZJ9"/>
<dbReference type="PRO" id="PR:Q8VZJ9"/>
<dbReference type="Proteomes" id="UP000006548">
    <property type="component" value="Chromosome 4"/>
</dbReference>
<dbReference type="ExpressionAtlas" id="Q8VZJ9">
    <property type="expression patterns" value="baseline and differential"/>
</dbReference>
<dbReference type="GO" id="GO:0005829">
    <property type="term" value="C:cytosol"/>
    <property type="evidence" value="ECO:0007005"/>
    <property type="project" value="TAIR"/>
</dbReference>
<dbReference type="GO" id="GO:0005524">
    <property type="term" value="F:ATP binding"/>
    <property type="evidence" value="ECO:0007669"/>
    <property type="project" value="UniProtKB-KW"/>
</dbReference>
<dbReference type="GO" id="GO:0106310">
    <property type="term" value="F:protein serine kinase activity"/>
    <property type="evidence" value="ECO:0007669"/>
    <property type="project" value="RHEA"/>
</dbReference>
<dbReference type="GO" id="GO:0004674">
    <property type="term" value="F:protein serine/threonine kinase activity"/>
    <property type="evidence" value="ECO:0007669"/>
    <property type="project" value="UniProtKB-KW"/>
</dbReference>
<dbReference type="GO" id="GO:0009555">
    <property type="term" value="P:pollen development"/>
    <property type="evidence" value="ECO:0000315"/>
    <property type="project" value="TAIR"/>
</dbReference>
<dbReference type="FunFam" id="3.30.200.20:FF:001335">
    <property type="entry name" value="Calmodulin-binding receptor-like cytoplasmic kinase 2"/>
    <property type="match status" value="1"/>
</dbReference>
<dbReference type="FunFam" id="1.10.510.10:FF:000300">
    <property type="entry name" value="Calmodulin-binding receptor-like cytoplasmic kinase 3"/>
    <property type="match status" value="1"/>
</dbReference>
<dbReference type="Gene3D" id="3.30.200.20">
    <property type="entry name" value="Phosphorylase Kinase, domain 1"/>
    <property type="match status" value="1"/>
</dbReference>
<dbReference type="Gene3D" id="1.10.510.10">
    <property type="entry name" value="Transferase(Phosphotransferase) domain 1"/>
    <property type="match status" value="1"/>
</dbReference>
<dbReference type="InterPro" id="IPR011009">
    <property type="entry name" value="Kinase-like_dom_sf"/>
</dbReference>
<dbReference type="InterPro" id="IPR000719">
    <property type="entry name" value="Prot_kinase_dom"/>
</dbReference>
<dbReference type="InterPro" id="IPR017441">
    <property type="entry name" value="Protein_kinase_ATP_BS"/>
</dbReference>
<dbReference type="InterPro" id="IPR008271">
    <property type="entry name" value="Ser/Thr_kinase_AS"/>
</dbReference>
<dbReference type="PANTHER" id="PTHR47989">
    <property type="entry name" value="OS01G0750732 PROTEIN"/>
    <property type="match status" value="1"/>
</dbReference>
<dbReference type="PANTHER" id="PTHR47989:SF71">
    <property type="entry name" value="PROTEIN KINASE DOMAIN-CONTAINING PROTEIN"/>
    <property type="match status" value="1"/>
</dbReference>
<dbReference type="Pfam" id="PF00069">
    <property type="entry name" value="Pkinase"/>
    <property type="match status" value="1"/>
</dbReference>
<dbReference type="SMART" id="SM00220">
    <property type="entry name" value="S_TKc"/>
    <property type="match status" value="1"/>
</dbReference>
<dbReference type="SUPFAM" id="SSF56112">
    <property type="entry name" value="Protein kinase-like (PK-like)"/>
    <property type="match status" value="1"/>
</dbReference>
<dbReference type="PROSITE" id="PS00107">
    <property type="entry name" value="PROTEIN_KINASE_ATP"/>
    <property type="match status" value="1"/>
</dbReference>
<dbReference type="PROSITE" id="PS50011">
    <property type="entry name" value="PROTEIN_KINASE_DOM"/>
    <property type="match status" value="1"/>
</dbReference>
<dbReference type="PROSITE" id="PS00108">
    <property type="entry name" value="PROTEIN_KINASE_ST"/>
    <property type="match status" value="1"/>
</dbReference>